<comment type="function">
    <text evidence="1">Catalyzes the reversible transfer of the terminal phosphate of ATP to form a long-chain polyphosphate (polyP).</text>
</comment>
<comment type="catalytic activity">
    <reaction evidence="1">
        <text>[phosphate](n) + ATP = [phosphate](n+1) + ADP</text>
        <dbReference type="Rhea" id="RHEA:19573"/>
        <dbReference type="Rhea" id="RHEA-COMP:9859"/>
        <dbReference type="Rhea" id="RHEA-COMP:14280"/>
        <dbReference type="ChEBI" id="CHEBI:16838"/>
        <dbReference type="ChEBI" id="CHEBI:30616"/>
        <dbReference type="ChEBI" id="CHEBI:456216"/>
        <dbReference type="EC" id="2.7.4.1"/>
    </reaction>
</comment>
<comment type="cofactor">
    <cofactor evidence="1">
        <name>Mg(2+)</name>
        <dbReference type="ChEBI" id="CHEBI:18420"/>
    </cofactor>
</comment>
<comment type="PTM">
    <text evidence="1">An intermediate of this reaction is the autophosphorylated ppk in which a phosphate is covalently linked to a histidine residue through a N-P bond.</text>
</comment>
<comment type="similarity">
    <text evidence="1">Belongs to the polyphosphate kinase 1 (PPK1) family.</text>
</comment>
<dbReference type="EC" id="2.7.4.1" evidence="1"/>
<dbReference type="EMBL" id="CP000958">
    <property type="protein sequence ID" value="ACA90453.1"/>
    <property type="molecule type" value="Genomic_DNA"/>
</dbReference>
<dbReference type="SMR" id="B1JZG0"/>
<dbReference type="GeneID" id="83048071"/>
<dbReference type="KEGG" id="bcm:Bcenmc03_1278"/>
<dbReference type="HOGENOM" id="CLU_009678_5_0_4"/>
<dbReference type="Proteomes" id="UP000002169">
    <property type="component" value="Chromosome 1"/>
</dbReference>
<dbReference type="GO" id="GO:0009358">
    <property type="term" value="C:polyphosphate kinase complex"/>
    <property type="evidence" value="ECO:0007669"/>
    <property type="project" value="InterPro"/>
</dbReference>
<dbReference type="GO" id="GO:0005524">
    <property type="term" value="F:ATP binding"/>
    <property type="evidence" value="ECO:0007669"/>
    <property type="project" value="UniProtKB-KW"/>
</dbReference>
<dbReference type="GO" id="GO:0046872">
    <property type="term" value="F:metal ion binding"/>
    <property type="evidence" value="ECO:0007669"/>
    <property type="project" value="UniProtKB-KW"/>
</dbReference>
<dbReference type="GO" id="GO:0008976">
    <property type="term" value="F:polyphosphate kinase activity"/>
    <property type="evidence" value="ECO:0007669"/>
    <property type="project" value="UniProtKB-UniRule"/>
</dbReference>
<dbReference type="GO" id="GO:0006799">
    <property type="term" value="P:polyphosphate biosynthetic process"/>
    <property type="evidence" value="ECO:0007669"/>
    <property type="project" value="UniProtKB-UniRule"/>
</dbReference>
<dbReference type="CDD" id="cd09165">
    <property type="entry name" value="PLDc_PaPPK1_C1_like"/>
    <property type="match status" value="1"/>
</dbReference>
<dbReference type="CDD" id="cd09168">
    <property type="entry name" value="PLDc_PaPPK1_C2_like"/>
    <property type="match status" value="1"/>
</dbReference>
<dbReference type="Gene3D" id="3.30.870.10">
    <property type="entry name" value="Endonuclease Chain A"/>
    <property type="match status" value="2"/>
</dbReference>
<dbReference type="Gene3D" id="3.30.1840.10">
    <property type="entry name" value="Polyphosphate kinase middle domain"/>
    <property type="match status" value="1"/>
</dbReference>
<dbReference type="Gene3D" id="1.20.58.310">
    <property type="entry name" value="Polyphosphate kinase N-terminal domain"/>
    <property type="match status" value="1"/>
</dbReference>
<dbReference type="HAMAP" id="MF_00347">
    <property type="entry name" value="Polyphosphate_kinase"/>
    <property type="match status" value="1"/>
</dbReference>
<dbReference type="InterPro" id="IPR003414">
    <property type="entry name" value="PP_kinase"/>
</dbReference>
<dbReference type="InterPro" id="IPR041108">
    <property type="entry name" value="PP_kinase_C_1"/>
</dbReference>
<dbReference type="InterPro" id="IPR024953">
    <property type="entry name" value="PP_kinase_middle"/>
</dbReference>
<dbReference type="InterPro" id="IPR036830">
    <property type="entry name" value="PP_kinase_middle_dom_sf"/>
</dbReference>
<dbReference type="InterPro" id="IPR025200">
    <property type="entry name" value="PPK_C_dom2"/>
</dbReference>
<dbReference type="InterPro" id="IPR025198">
    <property type="entry name" value="PPK_N_dom"/>
</dbReference>
<dbReference type="InterPro" id="IPR036832">
    <property type="entry name" value="PPK_N_dom_sf"/>
</dbReference>
<dbReference type="NCBIfam" id="TIGR03705">
    <property type="entry name" value="poly_P_kin"/>
    <property type="match status" value="1"/>
</dbReference>
<dbReference type="NCBIfam" id="NF003917">
    <property type="entry name" value="PRK05443.1-1"/>
    <property type="match status" value="1"/>
</dbReference>
<dbReference type="NCBIfam" id="NF003918">
    <property type="entry name" value="PRK05443.1-2"/>
    <property type="match status" value="1"/>
</dbReference>
<dbReference type="NCBIfam" id="NF003921">
    <property type="entry name" value="PRK05443.2-2"/>
    <property type="match status" value="1"/>
</dbReference>
<dbReference type="PANTHER" id="PTHR30218">
    <property type="entry name" value="POLYPHOSPHATE KINASE"/>
    <property type="match status" value="1"/>
</dbReference>
<dbReference type="PANTHER" id="PTHR30218:SF0">
    <property type="entry name" value="POLYPHOSPHATE KINASE"/>
    <property type="match status" value="1"/>
</dbReference>
<dbReference type="Pfam" id="PF02503">
    <property type="entry name" value="PP_kinase"/>
    <property type="match status" value="1"/>
</dbReference>
<dbReference type="Pfam" id="PF13090">
    <property type="entry name" value="PP_kinase_C"/>
    <property type="match status" value="1"/>
</dbReference>
<dbReference type="Pfam" id="PF17941">
    <property type="entry name" value="PP_kinase_C_1"/>
    <property type="match status" value="1"/>
</dbReference>
<dbReference type="Pfam" id="PF13089">
    <property type="entry name" value="PP_kinase_N"/>
    <property type="match status" value="1"/>
</dbReference>
<dbReference type="PIRSF" id="PIRSF015589">
    <property type="entry name" value="PP_kinase"/>
    <property type="match status" value="1"/>
</dbReference>
<dbReference type="SUPFAM" id="SSF56024">
    <property type="entry name" value="Phospholipase D/nuclease"/>
    <property type="match status" value="2"/>
</dbReference>
<dbReference type="SUPFAM" id="SSF143724">
    <property type="entry name" value="PHP14-like"/>
    <property type="match status" value="1"/>
</dbReference>
<dbReference type="SUPFAM" id="SSF140356">
    <property type="entry name" value="PPK N-terminal domain-like"/>
    <property type="match status" value="1"/>
</dbReference>
<protein>
    <recommendedName>
        <fullName evidence="1">Polyphosphate kinase</fullName>
        <ecNumber evidence="1">2.7.4.1</ecNumber>
    </recommendedName>
    <alternativeName>
        <fullName evidence="1">ATP-polyphosphate phosphotransferase</fullName>
    </alternativeName>
    <alternativeName>
        <fullName evidence="1">Polyphosphoric acid kinase</fullName>
    </alternativeName>
</protein>
<keyword id="KW-0067">ATP-binding</keyword>
<keyword id="KW-0418">Kinase</keyword>
<keyword id="KW-0460">Magnesium</keyword>
<keyword id="KW-0479">Metal-binding</keyword>
<keyword id="KW-0547">Nucleotide-binding</keyword>
<keyword id="KW-0597">Phosphoprotein</keyword>
<keyword id="KW-0808">Transferase</keyword>
<name>PPK1_BURO0</name>
<organism>
    <name type="scientific">Burkholderia orbicola (strain MC0-3)</name>
    <dbReference type="NCBI Taxonomy" id="406425"/>
    <lineage>
        <taxon>Bacteria</taxon>
        <taxon>Pseudomonadati</taxon>
        <taxon>Pseudomonadota</taxon>
        <taxon>Betaproteobacteria</taxon>
        <taxon>Burkholderiales</taxon>
        <taxon>Burkholderiaceae</taxon>
        <taxon>Burkholderia</taxon>
        <taxon>Burkholderia cepacia complex</taxon>
        <taxon>Burkholderia orbicola</taxon>
    </lineage>
</organism>
<accession>B1JZG0</accession>
<sequence length="687" mass="77391">MSVRYPLLNRELGILGFNERVLAQAADPQVPLLERLRFICITSSNLDEFFEVRMAGLQEQIRDNPGALTPDGMSLQHAYDLVVERAQRLVHRQYTMLHETVLPALEQEGIYFHASDSWNDEQLEWARRYFLDELLPVLTPIGLDPAHPFPRVLNKSLNFVVELEGRDAFGRQAVMGIVQAPRALPRVVRMPHALSGFEHGFVLLSSFMQRFVGELFPQLVVKSCNQFRITRNSELFVDEDEITNLRVALQGELPARHLGNAVRLEVSADTPLHIVRRLLEESELGDKDCYRVAGSVNLVRLMQIPDLVDRPDLKFTPFTASTPAVIANAPTMFDAIDAGDILLHHPYESFQPVLELLQQAARDPSVVAIKQTIYRTGTDSPLMDALMEAARNGKEVTVVVELLARFDEETNINWASQLEAVGAHVVYGVVGHKCHAKMMLIVRRVVQAGKASLRRYVHLGTGNYHPRTARLYTDFGLMTADQKICEDVHHVFQQLTGIGGELTLHELWQSPFTLHPRIIESIRAEIDNAQAGKRARIVAKMNALLEPSVIAALYEASQAGVKVDLIVRGVCALKPGVPGLSENITVRSIVGRFLEHHRIYYFHAGGAEDVYLSSADWMDRNLFRRVEVAFPIRERKLKRRVIAEGLSVCLGDNQSAWQMHSDGHYRRRRTGKTIRNAQLGLLAKFCS</sequence>
<evidence type="ECO:0000255" key="1">
    <source>
        <dbReference type="HAMAP-Rule" id="MF_00347"/>
    </source>
</evidence>
<reference key="1">
    <citation type="submission" date="2008-02" db="EMBL/GenBank/DDBJ databases">
        <title>Complete sequence of chromosome 1 of Burkholderia cenocepacia MC0-3.</title>
        <authorList>
            <person name="Copeland A."/>
            <person name="Lucas S."/>
            <person name="Lapidus A."/>
            <person name="Barry K."/>
            <person name="Bruce D."/>
            <person name="Goodwin L."/>
            <person name="Glavina del Rio T."/>
            <person name="Dalin E."/>
            <person name="Tice H."/>
            <person name="Pitluck S."/>
            <person name="Chain P."/>
            <person name="Malfatti S."/>
            <person name="Shin M."/>
            <person name="Vergez L."/>
            <person name="Schmutz J."/>
            <person name="Larimer F."/>
            <person name="Land M."/>
            <person name="Hauser L."/>
            <person name="Kyrpides N."/>
            <person name="Mikhailova N."/>
            <person name="Tiedje J."/>
            <person name="Richardson P."/>
        </authorList>
    </citation>
    <scope>NUCLEOTIDE SEQUENCE [LARGE SCALE GENOMIC DNA]</scope>
    <source>
        <strain>MC0-3</strain>
    </source>
</reference>
<feature type="chain" id="PRO_1000120499" description="Polyphosphate kinase">
    <location>
        <begin position="1"/>
        <end position="687"/>
    </location>
</feature>
<feature type="active site" description="Phosphohistidine intermediate" evidence="1">
    <location>
        <position position="435"/>
    </location>
</feature>
<feature type="binding site" evidence="1">
    <location>
        <position position="45"/>
    </location>
    <ligand>
        <name>ATP</name>
        <dbReference type="ChEBI" id="CHEBI:30616"/>
    </ligand>
</feature>
<feature type="binding site" evidence="1">
    <location>
        <position position="375"/>
    </location>
    <ligand>
        <name>Mg(2+)</name>
        <dbReference type="ChEBI" id="CHEBI:18420"/>
    </ligand>
</feature>
<feature type="binding site" evidence="1">
    <location>
        <position position="405"/>
    </location>
    <ligand>
        <name>Mg(2+)</name>
        <dbReference type="ChEBI" id="CHEBI:18420"/>
    </ligand>
</feature>
<feature type="binding site" evidence="1">
    <location>
        <position position="472"/>
    </location>
    <ligand>
        <name>ATP</name>
        <dbReference type="ChEBI" id="CHEBI:30616"/>
    </ligand>
</feature>
<feature type="binding site" evidence="1">
    <location>
        <position position="568"/>
    </location>
    <ligand>
        <name>ATP</name>
        <dbReference type="ChEBI" id="CHEBI:30616"/>
    </ligand>
</feature>
<feature type="binding site" evidence="1">
    <location>
        <position position="596"/>
    </location>
    <ligand>
        <name>ATP</name>
        <dbReference type="ChEBI" id="CHEBI:30616"/>
    </ligand>
</feature>
<proteinExistence type="inferred from homology"/>
<gene>
    <name evidence="1" type="primary">ppk</name>
    <name type="ordered locus">Bcenmc03_1278</name>
</gene>